<comment type="function">
    <text evidence="1 6">Catalyzes the oxidative deamination of D-amino acids with broad substrate specificity (By similarity). Enables the organism to utilize D-amino acids as a source of nutrients (PubMed:26132227). Enables the organism to utilize D-asparate and D-glutamate as a nitrogen source and may also contribute to utlization of D-tryptophan, D-tyrosine and D-asparagine as a nitrogen source (PubMed:26132227). Protects the organism from the toxicity of D-amino acids, including from D-glutamate (PubMed:26132227). May play a role in its interaction with the host (PubMed:26132227).</text>
</comment>
<comment type="catalytic activity">
    <reaction evidence="1">
        <text>a D-alpha-amino acid + O2 + H2O = a 2-oxocarboxylate + H2O2 + NH4(+)</text>
        <dbReference type="Rhea" id="RHEA:21816"/>
        <dbReference type="ChEBI" id="CHEBI:15377"/>
        <dbReference type="ChEBI" id="CHEBI:15379"/>
        <dbReference type="ChEBI" id="CHEBI:16240"/>
        <dbReference type="ChEBI" id="CHEBI:28938"/>
        <dbReference type="ChEBI" id="CHEBI:35179"/>
        <dbReference type="ChEBI" id="CHEBI:59871"/>
        <dbReference type="EC" id="1.4.3.3"/>
    </reaction>
    <physiologicalReaction direction="left-to-right" evidence="1">
        <dbReference type="Rhea" id="RHEA:21817"/>
    </physiologicalReaction>
</comment>
<comment type="cofactor">
    <cofactor evidence="3">
        <name>FAD</name>
        <dbReference type="ChEBI" id="CHEBI:57692"/>
    </cofactor>
</comment>
<comment type="subcellular location">
    <subcellularLocation>
        <location evidence="3">Peroxisome matrix</location>
    </subcellularLocation>
</comment>
<comment type="induction">
    <text evidence="6">Expression increases when grown on D-methionine as nitrogen source.</text>
</comment>
<comment type="disruption phenotype">
    <text evidence="6">Decreases growth on D-asparate and D-glutamate nitrogen sources (PubMed:26132227). Decreases growth in presence of D-glutamate (PubMed:26132227). Triple knockout of DAO1, DAO2 and DAO3 decreases growth on D-tryptophan, D-tyrosine and D-asparagine nitrogen sources and decreases virulence in a mouse intrapharyngeal aspiration model and an intravenous injection model of infection (PubMed:26132227).</text>
</comment>
<comment type="similarity">
    <text evidence="8">Belongs to the DAMOX/DASOX family.</text>
</comment>
<dbReference type="EC" id="1.4.3.3" evidence="1"/>
<dbReference type="EMBL" id="CP025764">
    <property type="protein sequence ID" value="KGB78140.1"/>
    <property type="molecule type" value="Genomic_DNA"/>
</dbReference>
<dbReference type="SMR" id="A0A095CCB2"/>
<dbReference type="STRING" id="294750.A0A095CCB2"/>
<dbReference type="VEuPathDB" id="FungiDB:CNBG_4227"/>
<dbReference type="HOGENOM" id="CLU_034311_1_0_1"/>
<dbReference type="OMA" id="GANWSPM"/>
<dbReference type="OrthoDB" id="2765at5206"/>
<dbReference type="Proteomes" id="UP000029445">
    <property type="component" value="Chromosome 6"/>
</dbReference>
<dbReference type="GO" id="GO:0005782">
    <property type="term" value="C:peroxisomal matrix"/>
    <property type="evidence" value="ECO:0007669"/>
    <property type="project" value="UniProtKB-SubCell"/>
</dbReference>
<dbReference type="GO" id="GO:0003884">
    <property type="term" value="F:D-amino-acid oxidase activity"/>
    <property type="evidence" value="ECO:0000250"/>
    <property type="project" value="UniProtKB"/>
</dbReference>
<dbReference type="GO" id="GO:0071949">
    <property type="term" value="F:FAD binding"/>
    <property type="evidence" value="ECO:0007669"/>
    <property type="project" value="InterPro"/>
</dbReference>
<dbReference type="GO" id="GO:0019478">
    <property type="term" value="P:D-amino acid catabolic process"/>
    <property type="evidence" value="ECO:0007669"/>
    <property type="project" value="TreeGrafter"/>
</dbReference>
<dbReference type="GO" id="GO:0098754">
    <property type="term" value="P:detoxification"/>
    <property type="evidence" value="ECO:0000315"/>
    <property type="project" value="UniProtKB"/>
</dbReference>
<dbReference type="FunFam" id="3.30.9.10:FF:000018">
    <property type="entry name" value="D-amino acid oxidase, putative"/>
    <property type="match status" value="1"/>
</dbReference>
<dbReference type="Gene3D" id="3.30.9.10">
    <property type="entry name" value="D-Amino Acid Oxidase, subunit A, domain 2"/>
    <property type="match status" value="1"/>
</dbReference>
<dbReference type="Gene3D" id="3.40.50.720">
    <property type="entry name" value="NAD(P)-binding Rossmann-like Domain"/>
    <property type="match status" value="1"/>
</dbReference>
<dbReference type="InterPro" id="IPR023209">
    <property type="entry name" value="DAO"/>
</dbReference>
<dbReference type="InterPro" id="IPR006076">
    <property type="entry name" value="FAD-dep_OxRdtase"/>
</dbReference>
<dbReference type="PANTHER" id="PTHR11530">
    <property type="entry name" value="D-AMINO ACID OXIDASE"/>
    <property type="match status" value="1"/>
</dbReference>
<dbReference type="PANTHER" id="PTHR11530:SF30">
    <property type="entry name" value="FAD DEPENDENT OXIDOREDUCTASE DOMAIN-CONTAINING PROTEIN"/>
    <property type="match status" value="1"/>
</dbReference>
<dbReference type="Pfam" id="PF01266">
    <property type="entry name" value="DAO"/>
    <property type="match status" value="1"/>
</dbReference>
<dbReference type="PIRSF" id="PIRSF000189">
    <property type="entry name" value="D-aa_oxidase"/>
    <property type="match status" value="1"/>
</dbReference>
<dbReference type="SUPFAM" id="SSF54373">
    <property type="entry name" value="FAD-linked reductases, C-terminal domain"/>
    <property type="match status" value="1"/>
</dbReference>
<dbReference type="SUPFAM" id="SSF51971">
    <property type="entry name" value="Nucleotide-binding domain"/>
    <property type="match status" value="1"/>
</dbReference>
<accession>A0A095CCB2</accession>
<reference evidence="10" key="1">
    <citation type="journal article" date="2011" name="MBio">
        <title>Genome variation in Cryptococcus gattii, an emerging pathogen of immunocompetent hosts.</title>
        <authorList>
            <person name="D'Souza C.A."/>
            <person name="Kronstad J.W."/>
            <person name="Taylor G."/>
            <person name="Warren R."/>
            <person name="Yuen M."/>
            <person name="Hu G."/>
            <person name="Jung W.H."/>
            <person name="Sham A."/>
            <person name="Kidd S.E."/>
            <person name="Tangen K."/>
            <person name="Lee N."/>
            <person name="Zeilmaker T."/>
            <person name="Sawkins J."/>
            <person name="McVicker G."/>
            <person name="Shah S."/>
            <person name="Gnerre S."/>
            <person name="Griggs A."/>
            <person name="Zeng Q."/>
            <person name="Bartlett K."/>
            <person name="Li W."/>
            <person name="Wang X."/>
            <person name="Heitman J."/>
            <person name="Stajich J.E."/>
            <person name="Fraser J.A."/>
            <person name="Meyer W."/>
            <person name="Carter D."/>
            <person name="Schein J."/>
            <person name="Krzywinski M."/>
            <person name="Kwon-Chung K.J."/>
            <person name="Varma A."/>
            <person name="Wang J."/>
            <person name="Brunham R."/>
            <person name="Fyfe M."/>
            <person name="Ouellette B.F.F."/>
            <person name="Siddiqui A."/>
            <person name="Marra M."/>
            <person name="Jones S."/>
            <person name="Holt R."/>
            <person name="Birren B.W."/>
            <person name="Galagan J.E."/>
            <person name="Cuomo C.A."/>
        </authorList>
    </citation>
    <scope>NUCLEOTIDE SEQUENCE [LARGE SCALE GENOMIC DNA]</scope>
    <source>
        <strain evidence="9">R265</strain>
    </source>
</reference>
<reference evidence="10" key="2">
    <citation type="journal article" date="2018" name="Proc. Natl. Acad. Sci. U.S.A.">
        <title>RNAi is a critical determinant of centromere evolution in closely related fungi.</title>
        <authorList>
            <person name="Yadav V."/>
            <person name="Sun S."/>
            <person name="Billmyre R.B."/>
            <person name="Thimmappa B.C."/>
            <person name="Shea T."/>
            <person name="Lintner R."/>
            <person name="Bakkeren G."/>
            <person name="Cuomo C.A."/>
            <person name="Heitman J."/>
            <person name="Sanyal K."/>
        </authorList>
    </citation>
    <scope>NUCLEOTIDE SEQUENCE [LARGE SCALE GENOMIC DNA]</scope>
    <source>
        <strain evidence="9">R265</strain>
    </source>
</reference>
<reference evidence="8" key="3">
    <citation type="journal article" date="2015" name="PLoS ONE">
        <title>Differences between Cryptococcus neoformans and Cryptococcus gattii in the Molecular Mechanisms Governing Utilization of D-Amino Acids as the Sole Nitrogen Source.</title>
        <authorList>
            <person name="Chang Y.C."/>
            <person name="Khanal Lamichhane A."/>
            <person name="Bradley J."/>
            <person name="Rodgers L."/>
            <person name="Ngamskulrungroj P."/>
            <person name="Kwon-Chung K.J."/>
        </authorList>
    </citation>
    <scope>FUNCTION</scope>
    <scope>INDUCTION</scope>
    <scope>DISRUPTION PHENOTYPE</scope>
</reference>
<keyword id="KW-1015">Disulfide bond</keyword>
<keyword id="KW-0274">FAD</keyword>
<keyword id="KW-0285">Flavoprotein</keyword>
<keyword id="KW-0325">Glycoprotein</keyword>
<keyword id="KW-0560">Oxidoreductase</keyword>
<keyword id="KW-0576">Peroxisome</keyword>
<keyword id="KW-0732">Signal</keyword>
<sequence>MVKYDAIILGSGVLGLSIASELILKGLKVAVVGKDLPEDLDSTGFASPWAGASWRSVAVNEAERRRDHYTFEQFARLAKEVPHLCEKRAYYYFWTCEDAWKEPWYKDLVFGYRMLKPEEVHAPFKYGVTYEAYTLNTPLYLLHLASTLRSAHVPIIRARLSSLDEAYSLPQLGPVDLVINATGLGARSLLGVEDPTVFPAKGQTVLVRAPVKECYGLVDPLPQPSQKAYIIPRPGPDGHVILGGCYLPNDWSTNVDPQVAEEILKQCHTLCPRLDGKGGKGTWKDIEVIAHNTGLRPVREAGLRCELEERVIGGKVRAGLATKGGKVGSGRKVSVVHAYGIGPAGYQASLGIAKELGELVDACVKKSSDNKAKL</sequence>
<organism evidence="10">
    <name type="scientific">Cryptococcus deuterogattii (strain R265)</name>
    <name type="common">Cryptococcus gattii VGII (strain R265)</name>
    <dbReference type="NCBI Taxonomy" id="294750"/>
    <lineage>
        <taxon>Eukaryota</taxon>
        <taxon>Fungi</taxon>
        <taxon>Dikarya</taxon>
        <taxon>Basidiomycota</taxon>
        <taxon>Agaricomycotina</taxon>
        <taxon>Tremellomycetes</taxon>
        <taxon>Tremellales</taxon>
        <taxon>Cryptococcaceae</taxon>
        <taxon>Cryptococcus</taxon>
        <taxon>Cryptococcus gattii species complex</taxon>
    </lineage>
</organism>
<feature type="signal peptide" evidence="4">
    <location>
        <begin position="1"/>
        <end position="19"/>
    </location>
</feature>
<feature type="chain" id="PRO_0000460039" description="D-amino-acid oxidase 3">
    <location>
        <begin position="20"/>
        <end position="374"/>
    </location>
</feature>
<feature type="short sequence motif" description="Microbody targeting signal" evidence="4">
    <location>
        <begin position="372"/>
        <end position="374"/>
    </location>
</feature>
<feature type="binding site" evidence="3">
    <location>
        <position position="11"/>
    </location>
    <ligand>
        <name>FAD</name>
        <dbReference type="ChEBI" id="CHEBI:57692"/>
    </ligand>
</feature>
<feature type="binding site" evidence="3">
    <location>
        <position position="14"/>
    </location>
    <ligand>
        <name>FAD</name>
        <dbReference type="ChEBI" id="CHEBI:57692"/>
    </ligand>
</feature>
<feature type="binding site" evidence="3">
    <location>
        <position position="34"/>
    </location>
    <ligand>
        <name>FAD</name>
        <dbReference type="ChEBI" id="CHEBI:57692"/>
    </ligand>
</feature>
<feature type="binding site" evidence="3">
    <location>
        <position position="35"/>
    </location>
    <ligand>
        <name>FAD</name>
        <dbReference type="ChEBI" id="CHEBI:57692"/>
    </ligand>
</feature>
<feature type="binding site" evidence="3">
    <location>
        <position position="46"/>
    </location>
    <ligand>
        <name>FAD</name>
        <dbReference type="ChEBI" id="CHEBI:57692"/>
    </ligand>
</feature>
<feature type="binding site" evidence="3">
    <location>
        <position position="47"/>
    </location>
    <ligand>
        <name>FAD</name>
        <dbReference type="ChEBI" id="CHEBI:57692"/>
    </ligand>
</feature>
<feature type="binding site" evidence="3">
    <location>
        <position position="51"/>
    </location>
    <ligand>
        <name>FAD</name>
        <dbReference type="ChEBI" id="CHEBI:57692"/>
    </ligand>
</feature>
<feature type="binding site" evidence="3">
    <location>
        <position position="229"/>
    </location>
    <ligand>
        <name>(R)-lactate</name>
        <dbReference type="ChEBI" id="CHEBI:16004"/>
    </ligand>
</feature>
<feature type="binding site" evidence="3">
    <location>
        <position position="229"/>
    </location>
    <ligand>
        <name>anthranilate</name>
        <dbReference type="ChEBI" id="CHEBI:16567"/>
        <label>1</label>
    </ligand>
</feature>
<feature type="binding site" evidence="3">
    <location>
        <position position="246"/>
    </location>
    <ligand>
        <name>(R)-lactate</name>
        <dbReference type="ChEBI" id="CHEBI:16004"/>
    </ligand>
</feature>
<feature type="binding site" evidence="3">
    <location>
        <position position="246"/>
    </location>
    <ligand>
        <name>anthranilate</name>
        <dbReference type="ChEBI" id="CHEBI:16567"/>
        <label>2</label>
    </ligand>
</feature>
<feature type="binding site" evidence="3">
    <location>
        <position position="296"/>
    </location>
    <ligand>
        <name>(R)-lactate</name>
        <dbReference type="ChEBI" id="CHEBI:16004"/>
    </ligand>
</feature>
<feature type="binding site" evidence="3">
    <location>
        <position position="296"/>
    </location>
    <ligand>
        <name>anthranilate</name>
        <dbReference type="ChEBI" id="CHEBI:16567"/>
        <label>1</label>
    </ligand>
</feature>
<feature type="binding site" evidence="3">
    <location>
        <position position="296"/>
    </location>
    <ligand>
        <name>FAD</name>
        <dbReference type="ChEBI" id="CHEBI:57692"/>
    </ligand>
</feature>
<feature type="binding site" evidence="2">
    <location>
        <position position="342"/>
    </location>
    <ligand>
        <name>FAD</name>
        <dbReference type="ChEBI" id="CHEBI:57692"/>
    </ligand>
</feature>
<feature type="binding site" evidence="3">
    <location>
        <position position="345"/>
    </location>
    <ligand>
        <name>FAD</name>
        <dbReference type="ChEBI" id="CHEBI:57692"/>
    </ligand>
</feature>
<feature type="binding site" evidence="3">
    <location>
        <position position="346"/>
    </location>
    <ligand>
        <name>FAD</name>
        <dbReference type="ChEBI" id="CHEBI:57692"/>
    </ligand>
</feature>
<feature type="binding site" evidence="3">
    <location>
        <position position="347"/>
    </location>
    <ligand>
        <name>FAD</name>
        <dbReference type="ChEBI" id="CHEBI:57692"/>
    </ligand>
</feature>
<feature type="glycosylation site" description="N-linked (GlcNAc...) asparagine" evidence="5">
    <location>
        <position position="180"/>
    </location>
</feature>
<feature type="disulfide bond" evidence="2">
    <location>
        <begin position="214"/>
        <end position="271"/>
    </location>
</feature>
<gene>
    <name evidence="7" type="primary">DAO3</name>
    <name evidence="9" type="ORF">CNBG_4227</name>
</gene>
<proteinExistence type="evidence at transcript level"/>
<protein>
    <recommendedName>
        <fullName evidence="7">D-amino-acid oxidase 3</fullName>
        <shortName evidence="8">DAAO</shortName>
        <shortName evidence="8">DAMOX</shortName>
        <shortName evidence="7">DAO</shortName>
        <ecNumber evidence="1">1.4.3.3</ecNumber>
    </recommendedName>
    <alternativeName>
        <fullName evidence="7">CgDAO3</fullName>
    </alternativeName>
</protein>
<name>OXDA3_CRYD2</name>
<evidence type="ECO:0000250" key="1">
    <source>
        <dbReference type="UniProtKB" id="A0A095C6S0"/>
    </source>
</evidence>
<evidence type="ECO:0000250" key="2">
    <source>
        <dbReference type="UniProtKB" id="A0A499UB99"/>
    </source>
</evidence>
<evidence type="ECO:0000250" key="3">
    <source>
        <dbReference type="UniProtKB" id="P80324"/>
    </source>
</evidence>
<evidence type="ECO:0000255" key="4"/>
<evidence type="ECO:0000255" key="5">
    <source>
        <dbReference type="PROSITE-ProRule" id="PRU00498"/>
    </source>
</evidence>
<evidence type="ECO:0000269" key="6">
    <source>
    </source>
</evidence>
<evidence type="ECO:0000303" key="7">
    <source>
    </source>
</evidence>
<evidence type="ECO:0000305" key="8"/>
<evidence type="ECO:0000312" key="9">
    <source>
        <dbReference type="EMBL" id="KGB78140.1"/>
    </source>
</evidence>
<evidence type="ECO:0000312" key="10">
    <source>
        <dbReference type="Proteomes" id="UP000029445"/>
    </source>
</evidence>